<name>F16PC_BACFR</name>
<dbReference type="EC" id="3.1.3.11" evidence="1"/>
<dbReference type="EMBL" id="AP006841">
    <property type="protein sequence ID" value="BAD48566.1"/>
    <property type="molecule type" value="Genomic_DNA"/>
</dbReference>
<dbReference type="RefSeq" id="WP_005794862.1">
    <property type="nucleotide sequence ID" value="NZ_UYXF01000005.1"/>
</dbReference>
<dbReference type="RefSeq" id="YP_099100.1">
    <property type="nucleotide sequence ID" value="NC_006347.1"/>
</dbReference>
<dbReference type="STRING" id="295405.BF1819"/>
<dbReference type="KEGG" id="bfr:BF1819"/>
<dbReference type="PATRIC" id="fig|295405.11.peg.1767"/>
<dbReference type="HOGENOM" id="CLU_028392_2_0_10"/>
<dbReference type="OrthoDB" id="9779903at2"/>
<dbReference type="UniPathway" id="UPA00138"/>
<dbReference type="Proteomes" id="UP000002197">
    <property type="component" value="Chromosome"/>
</dbReference>
<dbReference type="GO" id="GO:0042132">
    <property type="term" value="F:fructose 1,6-bisphosphate 1-phosphatase activity"/>
    <property type="evidence" value="ECO:0007669"/>
    <property type="project" value="UniProtKB-UniRule"/>
</dbReference>
<dbReference type="GO" id="GO:0006094">
    <property type="term" value="P:gluconeogenesis"/>
    <property type="evidence" value="ECO:0007669"/>
    <property type="project" value="UniProtKB-UniRule"/>
</dbReference>
<dbReference type="HAMAP" id="MF_01854">
    <property type="entry name" value="FBPase_class3"/>
    <property type="match status" value="1"/>
</dbReference>
<dbReference type="InterPro" id="IPR009164">
    <property type="entry name" value="FBPtase_class3"/>
</dbReference>
<dbReference type="InterPro" id="IPR029052">
    <property type="entry name" value="Metallo-depent_PP-like"/>
</dbReference>
<dbReference type="Pfam" id="PF06874">
    <property type="entry name" value="FBPase_2"/>
    <property type="match status" value="1"/>
</dbReference>
<dbReference type="PIRSF" id="PIRSF000906">
    <property type="entry name" value="FBPtase_Bacill"/>
    <property type="match status" value="1"/>
</dbReference>
<dbReference type="SUPFAM" id="SSF56300">
    <property type="entry name" value="Metallo-dependent phosphatases"/>
    <property type="match status" value="1"/>
</dbReference>
<keyword id="KW-0119">Carbohydrate metabolism</keyword>
<keyword id="KW-0378">Hydrolase</keyword>
<keyword id="KW-0464">Manganese</keyword>
<accession>Q64VB2</accession>
<gene>
    <name evidence="1" type="primary">fbp</name>
    <name type="ordered locus">BF1819</name>
</gene>
<comment type="catalytic activity">
    <reaction evidence="1">
        <text>beta-D-fructose 1,6-bisphosphate + H2O = beta-D-fructose 6-phosphate + phosphate</text>
        <dbReference type="Rhea" id="RHEA:11064"/>
        <dbReference type="ChEBI" id="CHEBI:15377"/>
        <dbReference type="ChEBI" id="CHEBI:32966"/>
        <dbReference type="ChEBI" id="CHEBI:43474"/>
        <dbReference type="ChEBI" id="CHEBI:57634"/>
        <dbReference type="EC" id="3.1.3.11"/>
    </reaction>
</comment>
<comment type="cofactor">
    <cofactor evidence="1">
        <name>Mn(2+)</name>
        <dbReference type="ChEBI" id="CHEBI:29035"/>
    </cofactor>
</comment>
<comment type="pathway">
    <text evidence="1">Carbohydrate biosynthesis; gluconeogenesis.</text>
</comment>
<comment type="similarity">
    <text evidence="1">Belongs to the FBPase class 3 family.</text>
</comment>
<sequence>MTAQSNITPESIVADLRYLQLLSRSFPTIAAASTEIINLEAILNLPKGTEHFLTDIHGEYEAFQHVLKNASGAVKRKVNEIFGHTLREIEKKELCTLIYYPEEKLQLIKATETDIDDWYLITLNQLVKVCQNVSSKYTRSKVRKSLPAEFSYIIQELLHESTIEPNKHAYINVIISTIISTRRADDFIIAMCNLIQRLTIDSLHIVGDIYDRGPGAHIIMDTLCDYHNFDIQWGNHDILWMGAASGNEACMANVIRLSMRYGNLGTLEDGYGINLLPLATFAMDTYADDPCTIFAPKTNFADSTYNEKTLRLITQMHKAITIIQFKLEANIINRRPEFGMGGRKLLEKIDFERGVFVYEGKEYPLRDTNFPTVDPADPYRLTDEEQELIEKIHYSFMNSEKLKKHMRCLFTYGGMYLVCNSNLLYHASVPLNEDGSFKHVNICGKEYWGKNLLDKIDQLIRTAYFDEDDEEEKRFAMDYIWYLWCGPDAPSFDKDKMATFERYFIADKSLHKETKGYYYALRNKEEICDRILEEFGVTGQHTHIINGHVPVKTIKGEQPMKAGGKLLVIDGGFSKAYQPETGIAGYTLVYHSHGLQLVQHDPFQSTQKAIEEGQDIKSTTFVIEFNSQRMMVKDTDKGKELVTQILDLKKLLVAYRIGLIKEKV</sequence>
<feature type="chain" id="PRO_0000363073" description="Fructose-1,6-bisphosphatase class 3">
    <location>
        <begin position="1"/>
        <end position="664"/>
    </location>
</feature>
<proteinExistence type="inferred from homology"/>
<protein>
    <recommendedName>
        <fullName evidence="1">Fructose-1,6-bisphosphatase class 3</fullName>
        <shortName evidence="1">FBPase class 3</shortName>
        <ecNumber evidence="1">3.1.3.11</ecNumber>
    </recommendedName>
    <alternativeName>
        <fullName evidence="1">D-fructose-1,6-bisphosphate 1-phosphohydrolase class 3</fullName>
    </alternativeName>
</protein>
<organism>
    <name type="scientific">Bacteroides fragilis (strain YCH46)</name>
    <dbReference type="NCBI Taxonomy" id="295405"/>
    <lineage>
        <taxon>Bacteria</taxon>
        <taxon>Pseudomonadati</taxon>
        <taxon>Bacteroidota</taxon>
        <taxon>Bacteroidia</taxon>
        <taxon>Bacteroidales</taxon>
        <taxon>Bacteroidaceae</taxon>
        <taxon>Bacteroides</taxon>
    </lineage>
</organism>
<reference key="1">
    <citation type="journal article" date="2004" name="Proc. Natl. Acad. Sci. U.S.A.">
        <title>Genomic analysis of Bacteroides fragilis reveals extensive DNA inversions regulating cell surface adaptation.</title>
        <authorList>
            <person name="Kuwahara T."/>
            <person name="Yamashita A."/>
            <person name="Hirakawa H."/>
            <person name="Nakayama H."/>
            <person name="Toh H."/>
            <person name="Okada N."/>
            <person name="Kuhara S."/>
            <person name="Hattori M."/>
            <person name="Hayashi T."/>
            <person name="Ohnishi Y."/>
        </authorList>
    </citation>
    <scope>NUCLEOTIDE SEQUENCE [LARGE SCALE GENOMIC DNA]</scope>
    <source>
        <strain>YCH46</strain>
    </source>
</reference>
<evidence type="ECO:0000255" key="1">
    <source>
        <dbReference type="HAMAP-Rule" id="MF_01854"/>
    </source>
</evidence>